<keyword id="KW-0002">3D-structure</keyword>
<keyword id="KW-0067">ATP-binding</keyword>
<keyword id="KW-0436">Ligase</keyword>
<keyword id="KW-0460">Magnesium</keyword>
<keyword id="KW-0479">Metal-binding</keyword>
<keyword id="KW-0520">NAD</keyword>
<keyword id="KW-0547">Nucleotide-binding</keyword>
<keyword id="KW-1185">Reference proteome</keyword>
<reference key="1">
    <citation type="journal article" date="1999" name="Science">
        <title>Genome sequence of the radioresistant bacterium Deinococcus radiodurans R1.</title>
        <authorList>
            <person name="White O."/>
            <person name="Eisen J.A."/>
            <person name="Heidelberg J.F."/>
            <person name="Hickey E.K."/>
            <person name="Peterson J.D."/>
            <person name="Dodson R.J."/>
            <person name="Haft D.H."/>
            <person name="Gwinn M.L."/>
            <person name="Nelson W.C."/>
            <person name="Richardson D.L."/>
            <person name="Moffat K.S."/>
            <person name="Qin H."/>
            <person name="Jiang L."/>
            <person name="Pamphile W."/>
            <person name="Crosby M."/>
            <person name="Shen M."/>
            <person name="Vamathevan J.J."/>
            <person name="Lam P."/>
            <person name="McDonald L.A."/>
            <person name="Utterback T.R."/>
            <person name="Zalewski C."/>
            <person name="Makarova K.S."/>
            <person name="Aravind L."/>
            <person name="Daly M.J."/>
            <person name="Minton K.W."/>
            <person name="Fleischmann R.D."/>
            <person name="Ketchum K.A."/>
            <person name="Nelson K.E."/>
            <person name="Salzberg S.L."/>
            <person name="Smith H.O."/>
            <person name="Venter J.C."/>
            <person name="Fraser C.M."/>
        </authorList>
    </citation>
    <scope>NUCLEOTIDE SEQUENCE [LARGE SCALE GENOMIC DNA]</scope>
    <source>
        <strain>ATCC 13939 / DSM 20539 / JCM 16871 / CCUG 27074 / LMG 4051 / NBRC 15346 / NCIMB 9279 / VKM B-1422 / R1</strain>
    </source>
</reference>
<reference evidence="2" key="2">
    <citation type="submission" date="2014-04" db="PDB data bank">
        <title>Structural analysis of the NH3-dependent NAD+ synthetase from Deinococcus radiodurans.</title>
        <authorList>
            <person name="Lee J.Y."/>
            <person name="Park Y.W."/>
            <person name="Yeo H.K."/>
        </authorList>
    </citation>
    <scope>X-RAY CRYSTALLOGRAPHY (2.60 ANGSTROMS)</scope>
    <source>
        <strain>ATCC 13939 / DSM 20539 / JCM 16871 / CCUG 27074 / LMG 4051 / NBRC 15346 / NCIMB 9279 / VKM B-1422 / R1</strain>
    </source>
</reference>
<dbReference type="EC" id="6.3.1.5" evidence="1"/>
<dbReference type="EMBL" id="AE001825">
    <property type="protein sequence ID" value="AAF12179.1"/>
    <property type="molecule type" value="Genomic_DNA"/>
</dbReference>
<dbReference type="PIR" id="A75617">
    <property type="entry name" value="A75617"/>
</dbReference>
<dbReference type="RefSeq" id="NP_285524.1">
    <property type="nucleotide sequence ID" value="NC_001264.1"/>
</dbReference>
<dbReference type="RefSeq" id="WP_010889460.1">
    <property type="nucleotide sequence ID" value="NC_001264.1"/>
</dbReference>
<dbReference type="PDB" id="4Q16">
    <property type="method" value="X-ray"/>
    <property type="resolution" value="2.60 A"/>
    <property type="chains" value="A/B/C/D=1-287"/>
</dbReference>
<dbReference type="PDBsum" id="4Q16"/>
<dbReference type="SMR" id="Q9RYV5"/>
<dbReference type="FunCoup" id="Q9RYV5">
    <property type="interactions" value="95"/>
</dbReference>
<dbReference type="STRING" id="243230.DR_A0201"/>
<dbReference type="PaxDb" id="243230-DR_A0201"/>
<dbReference type="EnsemblBacteria" id="AAF12179">
    <property type="protein sequence ID" value="AAF12179"/>
    <property type="gene ID" value="DR_A0201"/>
</dbReference>
<dbReference type="GeneID" id="69519095"/>
<dbReference type="KEGG" id="dra:DR_A0201"/>
<dbReference type="PATRIC" id="fig|243230.17.peg.3090"/>
<dbReference type="eggNOG" id="COG0171">
    <property type="taxonomic scope" value="Bacteria"/>
</dbReference>
<dbReference type="HOGENOM" id="CLU_059327_3_0_0"/>
<dbReference type="InParanoid" id="Q9RYV5"/>
<dbReference type="OrthoDB" id="9803818at2"/>
<dbReference type="BRENDA" id="6.3.1.5">
    <property type="organism ID" value="1856"/>
</dbReference>
<dbReference type="UniPathway" id="UPA00253">
    <property type="reaction ID" value="UER00333"/>
</dbReference>
<dbReference type="EvolutionaryTrace" id="Q9RYV5"/>
<dbReference type="Proteomes" id="UP000002524">
    <property type="component" value="Chromosome 2"/>
</dbReference>
<dbReference type="GO" id="GO:0005737">
    <property type="term" value="C:cytoplasm"/>
    <property type="evidence" value="ECO:0000318"/>
    <property type="project" value="GO_Central"/>
</dbReference>
<dbReference type="GO" id="GO:0005524">
    <property type="term" value="F:ATP binding"/>
    <property type="evidence" value="ECO:0007669"/>
    <property type="project" value="UniProtKB-UniRule"/>
</dbReference>
<dbReference type="GO" id="GO:0004359">
    <property type="term" value="F:glutaminase activity"/>
    <property type="evidence" value="ECO:0007669"/>
    <property type="project" value="InterPro"/>
</dbReference>
<dbReference type="GO" id="GO:0046872">
    <property type="term" value="F:metal ion binding"/>
    <property type="evidence" value="ECO:0007669"/>
    <property type="project" value="UniProtKB-KW"/>
</dbReference>
<dbReference type="GO" id="GO:0003952">
    <property type="term" value="F:NAD+ synthase (glutamine-hydrolyzing) activity"/>
    <property type="evidence" value="ECO:0007669"/>
    <property type="project" value="InterPro"/>
</dbReference>
<dbReference type="GO" id="GO:0008795">
    <property type="term" value="F:NAD+ synthase activity"/>
    <property type="evidence" value="ECO:0007669"/>
    <property type="project" value="UniProtKB-UniRule"/>
</dbReference>
<dbReference type="GO" id="GO:0009435">
    <property type="term" value="P:NAD biosynthetic process"/>
    <property type="evidence" value="ECO:0000318"/>
    <property type="project" value="GO_Central"/>
</dbReference>
<dbReference type="CDD" id="cd00553">
    <property type="entry name" value="NAD_synthase"/>
    <property type="match status" value="1"/>
</dbReference>
<dbReference type="FunFam" id="3.40.50.620:FF:000015">
    <property type="entry name" value="NH(3)-dependent NAD(+) synthetase"/>
    <property type="match status" value="1"/>
</dbReference>
<dbReference type="Gene3D" id="3.40.50.620">
    <property type="entry name" value="HUPs"/>
    <property type="match status" value="1"/>
</dbReference>
<dbReference type="HAMAP" id="MF_00193">
    <property type="entry name" value="NadE_ammonia_dep"/>
    <property type="match status" value="1"/>
</dbReference>
<dbReference type="InterPro" id="IPR022310">
    <property type="entry name" value="NAD/GMP_synthase"/>
</dbReference>
<dbReference type="InterPro" id="IPR003694">
    <property type="entry name" value="NAD_synthase"/>
</dbReference>
<dbReference type="InterPro" id="IPR022926">
    <property type="entry name" value="NH(3)-dep_NAD(+)_synth"/>
</dbReference>
<dbReference type="InterPro" id="IPR014729">
    <property type="entry name" value="Rossmann-like_a/b/a_fold"/>
</dbReference>
<dbReference type="NCBIfam" id="TIGR00552">
    <property type="entry name" value="nadE"/>
    <property type="match status" value="1"/>
</dbReference>
<dbReference type="NCBIfam" id="NF001979">
    <property type="entry name" value="PRK00768.1"/>
    <property type="match status" value="1"/>
</dbReference>
<dbReference type="PANTHER" id="PTHR23090">
    <property type="entry name" value="NH 3 /GLUTAMINE-DEPENDENT NAD + SYNTHETASE"/>
    <property type="match status" value="1"/>
</dbReference>
<dbReference type="PANTHER" id="PTHR23090:SF7">
    <property type="entry name" value="NH(3)-DEPENDENT NAD(+) SYNTHETASE"/>
    <property type="match status" value="1"/>
</dbReference>
<dbReference type="Pfam" id="PF02540">
    <property type="entry name" value="NAD_synthase"/>
    <property type="match status" value="1"/>
</dbReference>
<dbReference type="SUPFAM" id="SSF52402">
    <property type="entry name" value="Adenine nucleotide alpha hydrolases-like"/>
    <property type="match status" value="1"/>
</dbReference>
<accession>Q9RYV5</accession>
<comment type="function">
    <text evidence="1">Catalyzes the ATP-dependent amidation of deamido-NAD to form NAD. Uses ammonia as a nitrogen source.</text>
</comment>
<comment type="catalytic activity">
    <reaction evidence="1">
        <text>deamido-NAD(+) + NH4(+) + ATP = AMP + diphosphate + NAD(+) + H(+)</text>
        <dbReference type="Rhea" id="RHEA:21188"/>
        <dbReference type="ChEBI" id="CHEBI:15378"/>
        <dbReference type="ChEBI" id="CHEBI:28938"/>
        <dbReference type="ChEBI" id="CHEBI:30616"/>
        <dbReference type="ChEBI" id="CHEBI:33019"/>
        <dbReference type="ChEBI" id="CHEBI:57540"/>
        <dbReference type="ChEBI" id="CHEBI:58437"/>
        <dbReference type="ChEBI" id="CHEBI:456215"/>
        <dbReference type="EC" id="6.3.1.5"/>
    </reaction>
</comment>
<comment type="pathway">
    <text evidence="1">Cofactor biosynthesis; NAD(+) biosynthesis; NAD(+) from deamido-NAD(+) (ammonia route): step 1/1.</text>
</comment>
<comment type="subunit">
    <text evidence="1">Homodimer.</text>
</comment>
<comment type="similarity">
    <text evidence="1">Belongs to the NAD synthetase family.</text>
</comment>
<gene>
    <name evidence="1" type="primary">nadE</name>
    <name type="ordered locus">DR_A0201</name>
</gene>
<protein>
    <recommendedName>
        <fullName evidence="1">NH(3)-dependent NAD(+) synthetase</fullName>
        <ecNumber evidence="1">6.3.1.5</ecNumber>
    </recommendedName>
</protein>
<name>NADE_DEIRA</name>
<evidence type="ECO:0000255" key="1">
    <source>
        <dbReference type="HAMAP-Rule" id="MF_00193"/>
    </source>
</evidence>
<evidence type="ECO:0007744" key="2">
    <source>
        <dbReference type="PDB" id="4Q16"/>
    </source>
</evidence>
<evidence type="ECO:0007829" key="3">
    <source>
        <dbReference type="PDB" id="4Q16"/>
    </source>
</evidence>
<sequence>MTPSPLPLSPLRSHIIRELHVQPDIDPGAEVERRVAFLCDYLQSTPTKGFVLGISGGQDSTLAGRLCQLAVERRRSQGHGATFLAVRLPYGVQADEADAQQALDFIQADREVTVNIKEAADASVAAAQAALGSEVRDFVRGNVKARERMVAQYALAGQENLLVVGTDHAAEALTGFYTKYGDGGVDLTPLSGLTKRQGAQLLAHLGAPEGTWRKVPTADLEDDRPGLPDEVALGVTYAQIDAYLEGREVSDEAAARLERLFLNSRHKRALPVTPFDGWWQPGEQKQS</sequence>
<organism>
    <name type="scientific">Deinococcus radiodurans (strain ATCC 13939 / DSM 20539 / JCM 16871 / CCUG 27074 / LMG 4051 / NBRC 15346 / NCIMB 9279 / VKM B-1422 / R1)</name>
    <dbReference type="NCBI Taxonomy" id="243230"/>
    <lineage>
        <taxon>Bacteria</taxon>
        <taxon>Thermotogati</taxon>
        <taxon>Deinococcota</taxon>
        <taxon>Deinococci</taxon>
        <taxon>Deinococcales</taxon>
        <taxon>Deinococcaceae</taxon>
        <taxon>Deinococcus</taxon>
    </lineage>
</organism>
<feature type="chain" id="PRO_0000152166" description="NH(3)-dependent NAD(+) synthetase">
    <location>
        <begin position="1"/>
        <end position="287"/>
    </location>
</feature>
<feature type="binding site" evidence="1">
    <location>
        <begin position="53"/>
        <end position="60"/>
    </location>
    <ligand>
        <name>ATP</name>
        <dbReference type="ChEBI" id="CHEBI:30616"/>
    </ligand>
</feature>
<feature type="binding site" evidence="1">
    <location>
        <position position="59"/>
    </location>
    <ligand>
        <name>Mg(2+)</name>
        <dbReference type="ChEBI" id="CHEBI:18420"/>
    </ligand>
</feature>
<feature type="binding site" evidence="1">
    <location>
        <position position="146"/>
    </location>
    <ligand>
        <name>deamido-NAD(+)</name>
        <dbReference type="ChEBI" id="CHEBI:58437"/>
    </ligand>
</feature>
<feature type="binding site" evidence="1">
    <location>
        <position position="166"/>
    </location>
    <ligand>
        <name>ATP</name>
        <dbReference type="ChEBI" id="CHEBI:30616"/>
    </ligand>
</feature>
<feature type="binding site" evidence="1">
    <location>
        <position position="171"/>
    </location>
    <ligand>
        <name>Mg(2+)</name>
        <dbReference type="ChEBI" id="CHEBI:18420"/>
    </ligand>
</feature>
<feature type="binding site" evidence="1">
    <location>
        <position position="179"/>
    </location>
    <ligand>
        <name>deamido-NAD(+)</name>
        <dbReference type="ChEBI" id="CHEBI:58437"/>
    </ligand>
</feature>
<feature type="binding site" evidence="1">
    <location>
        <position position="186"/>
    </location>
    <ligand>
        <name>deamido-NAD(+)</name>
        <dbReference type="ChEBI" id="CHEBI:58437"/>
    </ligand>
</feature>
<feature type="binding site" evidence="1">
    <location>
        <position position="195"/>
    </location>
    <ligand>
        <name>ATP</name>
        <dbReference type="ChEBI" id="CHEBI:30616"/>
    </ligand>
</feature>
<feature type="binding site" evidence="1">
    <location>
        <position position="217"/>
    </location>
    <ligand>
        <name>ATP</name>
        <dbReference type="ChEBI" id="CHEBI:30616"/>
    </ligand>
</feature>
<feature type="binding site" evidence="1">
    <location>
        <begin position="266"/>
        <end position="267"/>
    </location>
    <ligand>
        <name>deamido-NAD(+)</name>
        <dbReference type="ChEBI" id="CHEBI:58437"/>
    </ligand>
</feature>
<feature type="helix" evidence="3">
    <location>
        <begin position="10"/>
        <end position="19"/>
    </location>
</feature>
<feature type="helix" evidence="3">
    <location>
        <begin position="27"/>
        <end position="43"/>
    </location>
</feature>
<feature type="strand" evidence="3">
    <location>
        <begin position="49"/>
        <end position="53"/>
    </location>
</feature>
<feature type="helix" evidence="3">
    <location>
        <begin position="58"/>
        <end position="76"/>
    </location>
</feature>
<feature type="strand" evidence="3">
    <location>
        <begin position="82"/>
        <end position="87"/>
    </location>
</feature>
<feature type="strand" evidence="3">
    <location>
        <begin position="90"/>
        <end position="92"/>
    </location>
</feature>
<feature type="helix" evidence="3">
    <location>
        <begin position="97"/>
        <end position="106"/>
    </location>
</feature>
<feature type="strand" evidence="3">
    <location>
        <begin position="109"/>
        <end position="113"/>
    </location>
</feature>
<feature type="helix" evidence="3">
    <location>
        <begin position="117"/>
        <end position="131"/>
    </location>
</feature>
<feature type="helix" evidence="3">
    <location>
        <begin position="137"/>
        <end position="159"/>
    </location>
</feature>
<feature type="strand" evidence="3">
    <location>
        <begin position="162"/>
        <end position="164"/>
    </location>
</feature>
<feature type="helix" evidence="3">
    <location>
        <begin position="169"/>
        <end position="174"/>
    </location>
</feature>
<feature type="turn" evidence="3">
    <location>
        <begin position="179"/>
        <end position="183"/>
    </location>
</feature>
<feature type="turn" evidence="3">
    <location>
        <begin position="189"/>
        <end position="192"/>
    </location>
</feature>
<feature type="helix" evidence="3">
    <location>
        <begin position="195"/>
        <end position="204"/>
    </location>
</feature>
<feature type="helix" evidence="3">
    <location>
        <begin position="209"/>
        <end position="211"/>
    </location>
</feature>
<feature type="helix" evidence="3">
    <location>
        <begin position="229"/>
        <end position="233"/>
    </location>
</feature>
<feature type="helix" evidence="3">
    <location>
        <begin position="237"/>
        <end position="244"/>
    </location>
</feature>
<feature type="helix" evidence="3">
    <location>
        <begin position="251"/>
        <end position="263"/>
    </location>
</feature>
<feature type="helix" evidence="3">
    <location>
        <begin position="264"/>
        <end position="267"/>
    </location>
</feature>
<proteinExistence type="evidence at protein level"/>